<gene>
    <name evidence="1" type="primary">rpsS</name>
    <name type="ordered locus">Gmet_0630</name>
</gene>
<accession>Q39Y02</accession>
<feature type="chain" id="PRO_0000265365" description="Small ribosomal subunit protein uS19">
    <location>
        <begin position="1"/>
        <end position="93"/>
    </location>
</feature>
<comment type="function">
    <text evidence="1">Protein S19 forms a complex with S13 that binds strongly to the 16S ribosomal RNA.</text>
</comment>
<comment type="similarity">
    <text evidence="1">Belongs to the universal ribosomal protein uS19 family.</text>
</comment>
<dbReference type="EMBL" id="CP000148">
    <property type="protein sequence ID" value="ABB30872.1"/>
    <property type="molecule type" value="Genomic_DNA"/>
</dbReference>
<dbReference type="RefSeq" id="WP_004514241.1">
    <property type="nucleotide sequence ID" value="NC_007517.1"/>
</dbReference>
<dbReference type="SMR" id="Q39Y02"/>
<dbReference type="STRING" id="269799.Gmet_0630"/>
<dbReference type="KEGG" id="gme:Gmet_0630"/>
<dbReference type="eggNOG" id="COG0185">
    <property type="taxonomic scope" value="Bacteria"/>
</dbReference>
<dbReference type="HOGENOM" id="CLU_144911_0_1_7"/>
<dbReference type="Proteomes" id="UP000007073">
    <property type="component" value="Chromosome"/>
</dbReference>
<dbReference type="GO" id="GO:0005737">
    <property type="term" value="C:cytoplasm"/>
    <property type="evidence" value="ECO:0007669"/>
    <property type="project" value="UniProtKB-ARBA"/>
</dbReference>
<dbReference type="GO" id="GO:0015935">
    <property type="term" value="C:small ribosomal subunit"/>
    <property type="evidence" value="ECO:0007669"/>
    <property type="project" value="InterPro"/>
</dbReference>
<dbReference type="GO" id="GO:0019843">
    <property type="term" value="F:rRNA binding"/>
    <property type="evidence" value="ECO:0007669"/>
    <property type="project" value="UniProtKB-UniRule"/>
</dbReference>
<dbReference type="GO" id="GO:0003735">
    <property type="term" value="F:structural constituent of ribosome"/>
    <property type="evidence" value="ECO:0007669"/>
    <property type="project" value="InterPro"/>
</dbReference>
<dbReference type="GO" id="GO:0000028">
    <property type="term" value="P:ribosomal small subunit assembly"/>
    <property type="evidence" value="ECO:0007669"/>
    <property type="project" value="TreeGrafter"/>
</dbReference>
<dbReference type="GO" id="GO:0006412">
    <property type="term" value="P:translation"/>
    <property type="evidence" value="ECO:0007669"/>
    <property type="project" value="UniProtKB-UniRule"/>
</dbReference>
<dbReference type="FunFam" id="3.30.860.10:FF:000001">
    <property type="entry name" value="30S ribosomal protein S19"/>
    <property type="match status" value="1"/>
</dbReference>
<dbReference type="Gene3D" id="3.30.860.10">
    <property type="entry name" value="30s Ribosomal Protein S19, Chain A"/>
    <property type="match status" value="1"/>
</dbReference>
<dbReference type="HAMAP" id="MF_00531">
    <property type="entry name" value="Ribosomal_uS19"/>
    <property type="match status" value="1"/>
</dbReference>
<dbReference type="InterPro" id="IPR002222">
    <property type="entry name" value="Ribosomal_uS19"/>
</dbReference>
<dbReference type="InterPro" id="IPR005732">
    <property type="entry name" value="Ribosomal_uS19_bac-type"/>
</dbReference>
<dbReference type="InterPro" id="IPR020934">
    <property type="entry name" value="Ribosomal_uS19_CS"/>
</dbReference>
<dbReference type="InterPro" id="IPR023575">
    <property type="entry name" value="Ribosomal_uS19_SF"/>
</dbReference>
<dbReference type="NCBIfam" id="TIGR01050">
    <property type="entry name" value="rpsS_bact"/>
    <property type="match status" value="1"/>
</dbReference>
<dbReference type="PANTHER" id="PTHR11880">
    <property type="entry name" value="RIBOSOMAL PROTEIN S19P FAMILY MEMBER"/>
    <property type="match status" value="1"/>
</dbReference>
<dbReference type="PANTHER" id="PTHR11880:SF8">
    <property type="entry name" value="SMALL RIBOSOMAL SUBUNIT PROTEIN US19M"/>
    <property type="match status" value="1"/>
</dbReference>
<dbReference type="Pfam" id="PF00203">
    <property type="entry name" value="Ribosomal_S19"/>
    <property type="match status" value="1"/>
</dbReference>
<dbReference type="PIRSF" id="PIRSF002144">
    <property type="entry name" value="Ribosomal_S19"/>
    <property type="match status" value="1"/>
</dbReference>
<dbReference type="PRINTS" id="PR00975">
    <property type="entry name" value="RIBOSOMALS19"/>
</dbReference>
<dbReference type="SUPFAM" id="SSF54570">
    <property type="entry name" value="Ribosomal protein S19"/>
    <property type="match status" value="1"/>
</dbReference>
<dbReference type="PROSITE" id="PS00323">
    <property type="entry name" value="RIBOSOMAL_S19"/>
    <property type="match status" value="1"/>
</dbReference>
<organism>
    <name type="scientific">Geobacter metallireducens (strain ATCC 53774 / DSM 7210 / GS-15)</name>
    <dbReference type="NCBI Taxonomy" id="269799"/>
    <lineage>
        <taxon>Bacteria</taxon>
        <taxon>Pseudomonadati</taxon>
        <taxon>Thermodesulfobacteriota</taxon>
        <taxon>Desulfuromonadia</taxon>
        <taxon>Geobacterales</taxon>
        <taxon>Geobacteraceae</taxon>
        <taxon>Geobacter</taxon>
    </lineage>
</organism>
<proteinExistence type="inferred from homology"/>
<reference key="1">
    <citation type="journal article" date="2009" name="BMC Microbiol.">
        <title>The genome sequence of Geobacter metallireducens: features of metabolism, physiology and regulation common and dissimilar to Geobacter sulfurreducens.</title>
        <authorList>
            <person name="Aklujkar M."/>
            <person name="Krushkal J."/>
            <person name="DiBartolo G."/>
            <person name="Lapidus A."/>
            <person name="Land M.L."/>
            <person name="Lovley D.R."/>
        </authorList>
    </citation>
    <scope>NUCLEOTIDE SEQUENCE [LARGE SCALE GENOMIC DNA]</scope>
    <source>
        <strain>ATCC 53774 / DSM 7210 / GS-15</strain>
    </source>
</reference>
<evidence type="ECO:0000255" key="1">
    <source>
        <dbReference type="HAMAP-Rule" id="MF_00531"/>
    </source>
</evidence>
<evidence type="ECO:0000305" key="2"/>
<sequence length="93" mass="10330">MARSIKKGPFVDDHLAKKVAAEGTGSKKVLKTWSRRSTITPDFIGLTFAVHNGKKFIPVFVTENMVGHKLGEFAPTRTFYGHAADKKSKLKKK</sequence>
<keyword id="KW-1185">Reference proteome</keyword>
<keyword id="KW-0687">Ribonucleoprotein</keyword>
<keyword id="KW-0689">Ribosomal protein</keyword>
<keyword id="KW-0694">RNA-binding</keyword>
<keyword id="KW-0699">rRNA-binding</keyword>
<protein>
    <recommendedName>
        <fullName evidence="1">Small ribosomal subunit protein uS19</fullName>
    </recommendedName>
    <alternativeName>
        <fullName evidence="2">30S ribosomal protein S19</fullName>
    </alternativeName>
</protein>
<name>RS19_GEOMG</name>